<keyword id="KW-0143">Chaperone</keyword>
<keyword id="KW-0963">Cytoplasm</keyword>
<keyword id="KW-1185">Reference proteome</keyword>
<keyword id="KW-0690">Ribosome biogenesis</keyword>
<keyword id="KW-0698">rRNA processing</keyword>
<sequence length="170" mass="18505">MERRYVPVADVARPHGVQGELRLRLYNEASDLLLTRPPIRLRLPDGSARDAKIVATRPVDKALLVRIAGIDDRDAAEALRGATVCVPRDAFAPLSEGEFYACDVEGARVMTPDGDLLGHVRSLQSYPTCDVLVVERQGADSIEVPLTESFVSSVDAERQVVQLATLEGLV</sequence>
<feature type="chain" id="PRO_0000351797" description="Ribosome maturation factor RimM">
    <location>
        <begin position="1"/>
        <end position="170"/>
    </location>
</feature>
<feature type="domain" description="PRC barrel" evidence="1">
    <location>
        <begin position="96"/>
        <end position="169"/>
    </location>
</feature>
<reference key="1">
    <citation type="journal article" date="2007" name="Nat. Biotechnol.">
        <title>Complete genome sequence of the myxobacterium Sorangium cellulosum.</title>
        <authorList>
            <person name="Schneiker S."/>
            <person name="Perlova O."/>
            <person name="Kaiser O."/>
            <person name="Gerth K."/>
            <person name="Alici A."/>
            <person name="Altmeyer M.O."/>
            <person name="Bartels D."/>
            <person name="Bekel T."/>
            <person name="Beyer S."/>
            <person name="Bode E."/>
            <person name="Bode H.B."/>
            <person name="Bolten C.J."/>
            <person name="Choudhuri J.V."/>
            <person name="Doss S."/>
            <person name="Elnakady Y.A."/>
            <person name="Frank B."/>
            <person name="Gaigalat L."/>
            <person name="Goesmann A."/>
            <person name="Groeger C."/>
            <person name="Gross F."/>
            <person name="Jelsbak L."/>
            <person name="Jelsbak L."/>
            <person name="Kalinowski J."/>
            <person name="Kegler C."/>
            <person name="Knauber T."/>
            <person name="Konietzny S."/>
            <person name="Kopp M."/>
            <person name="Krause L."/>
            <person name="Krug D."/>
            <person name="Linke B."/>
            <person name="Mahmud T."/>
            <person name="Martinez-Arias R."/>
            <person name="McHardy A.C."/>
            <person name="Merai M."/>
            <person name="Meyer F."/>
            <person name="Mormann S."/>
            <person name="Munoz-Dorado J."/>
            <person name="Perez J."/>
            <person name="Pradella S."/>
            <person name="Rachid S."/>
            <person name="Raddatz G."/>
            <person name="Rosenau F."/>
            <person name="Rueckert C."/>
            <person name="Sasse F."/>
            <person name="Scharfe M."/>
            <person name="Schuster S.C."/>
            <person name="Suen G."/>
            <person name="Treuner-Lange A."/>
            <person name="Velicer G.J."/>
            <person name="Vorholter F.-J."/>
            <person name="Weissman K.J."/>
            <person name="Welch R.D."/>
            <person name="Wenzel S.C."/>
            <person name="Whitworth D.E."/>
            <person name="Wilhelm S."/>
            <person name="Wittmann C."/>
            <person name="Bloecker H."/>
            <person name="Puehler A."/>
            <person name="Mueller R."/>
        </authorList>
    </citation>
    <scope>NUCLEOTIDE SEQUENCE [LARGE SCALE GENOMIC DNA]</scope>
    <source>
        <strain>So ce56</strain>
    </source>
</reference>
<proteinExistence type="inferred from homology"/>
<comment type="function">
    <text evidence="1">An accessory protein needed during the final step in the assembly of 30S ribosomal subunit, possibly for assembly of the head region. Essential for efficient processing of 16S rRNA. May be needed both before and after RbfA during the maturation of 16S rRNA. It has affinity for free ribosomal 30S subunits but not for 70S ribosomes.</text>
</comment>
<comment type="subunit">
    <text evidence="1">Binds ribosomal protein uS19.</text>
</comment>
<comment type="subcellular location">
    <subcellularLocation>
        <location evidence="1">Cytoplasm</location>
    </subcellularLocation>
</comment>
<comment type="domain">
    <text evidence="1">The PRC barrel domain binds ribosomal protein uS19.</text>
</comment>
<comment type="similarity">
    <text evidence="1">Belongs to the RimM family.</text>
</comment>
<gene>
    <name evidence="1" type="primary">rimM</name>
    <name type="ordered locus">sce4437</name>
</gene>
<organism>
    <name type="scientific">Sorangium cellulosum (strain So ce56)</name>
    <name type="common">Polyangium cellulosum (strain So ce56)</name>
    <dbReference type="NCBI Taxonomy" id="448385"/>
    <lineage>
        <taxon>Bacteria</taxon>
        <taxon>Pseudomonadati</taxon>
        <taxon>Myxococcota</taxon>
        <taxon>Polyangia</taxon>
        <taxon>Polyangiales</taxon>
        <taxon>Polyangiaceae</taxon>
        <taxon>Sorangium</taxon>
    </lineage>
</organism>
<evidence type="ECO:0000255" key="1">
    <source>
        <dbReference type="HAMAP-Rule" id="MF_00014"/>
    </source>
</evidence>
<accession>A9F3N7</accession>
<protein>
    <recommendedName>
        <fullName evidence="1">Ribosome maturation factor RimM</fullName>
    </recommendedName>
</protein>
<dbReference type="EMBL" id="AM746676">
    <property type="protein sequence ID" value="CAN94600.1"/>
    <property type="molecule type" value="Genomic_DNA"/>
</dbReference>
<dbReference type="RefSeq" id="WP_012237069.1">
    <property type="nucleotide sequence ID" value="NC_010162.1"/>
</dbReference>
<dbReference type="SMR" id="A9F3N7"/>
<dbReference type="STRING" id="448385.sce4437"/>
<dbReference type="KEGG" id="scl:sce4437"/>
<dbReference type="eggNOG" id="COG0806">
    <property type="taxonomic scope" value="Bacteria"/>
</dbReference>
<dbReference type="HOGENOM" id="CLU_077636_1_0_7"/>
<dbReference type="OrthoDB" id="9783509at2"/>
<dbReference type="BioCyc" id="SCEL448385:SCE_RS22770-MONOMER"/>
<dbReference type="Proteomes" id="UP000002139">
    <property type="component" value="Chromosome"/>
</dbReference>
<dbReference type="GO" id="GO:0005737">
    <property type="term" value="C:cytoplasm"/>
    <property type="evidence" value="ECO:0007669"/>
    <property type="project" value="UniProtKB-SubCell"/>
</dbReference>
<dbReference type="GO" id="GO:0005840">
    <property type="term" value="C:ribosome"/>
    <property type="evidence" value="ECO:0007669"/>
    <property type="project" value="InterPro"/>
</dbReference>
<dbReference type="GO" id="GO:0043022">
    <property type="term" value="F:ribosome binding"/>
    <property type="evidence" value="ECO:0007669"/>
    <property type="project" value="InterPro"/>
</dbReference>
<dbReference type="GO" id="GO:0042274">
    <property type="term" value="P:ribosomal small subunit biogenesis"/>
    <property type="evidence" value="ECO:0007669"/>
    <property type="project" value="UniProtKB-UniRule"/>
</dbReference>
<dbReference type="GO" id="GO:0006364">
    <property type="term" value="P:rRNA processing"/>
    <property type="evidence" value="ECO:0007669"/>
    <property type="project" value="UniProtKB-UniRule"/>
</dbReference>
<dbReference type="Gene3D" id="2.30.30.240">
    <property type="entry name" value="PRC-barrel domain"/>
    <property type="match status" value="1"/>
</dbReference>
<dbReference type="Gene3D" id="2.40.30.60">
    <property type="entry name" value="RimM"/>
    <property type="match status" value="1"/>
</dbReference>
<dbReference type="HAMAP" id="MF_00014">
    <property type="entry name" value="Ribosome_mat_RimM"/>
    <property type="match status" value="1"/>
</dbReference>
<dbReference type="InterPro" id="IPR011033">
    <property type="entry name" value="PRC_barrel-like_sf"/>
</dbReference>
<dbReference type="InterPro" id="IPR056792">
    <property type="entry name" value="PRC_RimM"/>
</dbReference>
<dbReference type="InterPro" id="IPR011961">
    <property type="entry name" value="RimM"/>
</dbReference>
<dbReference type="InterPro" id="IPR002676">
    <property type="entry name" value="RimM_N"/>
</dbReference>
<dbReference type="InterPro" id="IPR036976">
    <property type="entry name" value="RimM_N_sf"/>
</dbReference>
<dbReference type="InterPro" id="IPR009000">
    <property type="entry name" value="Transl_B-barrel_sf"/>
</dbReference>
<dbReference type="NCBIfam" id="TIGR02273">
    <property type="entry name" value="16S_RimM"/>
    <property type="match status" value="1"/>
</dbReference>
<dbReference type="PANTHER" id="PTHR33692">
    <property type="entry name" value="RIBOSOME MATURATION FACTOR RIMM"/>
    <property type="match status" value="1"/>
</dbReference>
<dbReference type="PANTHER" id="PTHR33692:SF1">
    <property type="entry name" value="RIBOSOME MATURATION FACTOR RIMM"/>
    <property type="match status" value="1"/>
</dbReference>
<dbReference type="Pfam" id="PF24986">
    <property type="entry name" value="PRC_RimM"/>
    <property type="match status" value="1"/>
</dbReference>
<dbReference type="Pfam" id="PF01782">
    <property type="entry name" value="RimM"/>
    <property type="match status" value="1"/>
</dbReference>
<dbReference type="SUPFAM" id="SSF50346">
    <property type="entry name" value="PRC-barrel domain"/>
    <property type="match status" value="1"/>
</dbReference>
<dbReference type="SUPFAM" id="SSF50447">
    <property type="entry name" value="Translation proteins"/>
    <property type="match status" value="1"/>
</dbReference>
<name>RIMM_SORC5</name>